<feature type="signal peptide" evidence="2">
    <location>
        <begin position="1"/>
        <end position="25"/>
    </location>
</feature>
<feature type="propeptide" id="PRO_0000353087" evidence="1">
    <location>
        <begin position="26"/>
        <end position="79"/>
    </location>
</feature>
<feature type="peptide" id="PRO_0000353088" description="Calcitonin receptor-stimulating peptide 3">
    <location>
        <begin position="80"/>
        <end position="116"/>
    </location>
</feature>
<feature type="propeptide" id="PRO_0000353089" evidence="1">
    <location>
        <begin position="122"/>
        <end position="125"/>
    </location>
</feature>
<feature type="modified residue" description="Leucine amide" evidence="1">
    <location>
        <position position="116"/>
    </location>
</feature>
<feature type="disulfide bond" evidence="1">
    <location>
        <begin position="81"/>
        <end position="86"/>
    </location>
</feature>
<dbReference type="EMBL" id="AB114134">
    <property type="protein sequence ID" value="BAC81766.1"/>
    <property type="molecule type" value="mRNA"/>
</dbReference>
<dbReference type="EMBL" id="AB164324">
    <property type="protein sequence ID" value="BAF36050.1"/>
    <property type="molecule type" value="Genomic_DNA"/>
</dbReference>
<dbReference type="RefSeq" id="NP_998911.1">
    <property type="nucleotide sequence ID" value="NM_213746.1"/>
</dbReference>
<dbReference type="RefSeq" id="XP_005661169.1">
    <property type="nucleotide sequence ID" value="XM_005661112.3"/>
</dbReference>
<dbReference type="RefSeq" id="XP_005661170.1">
    <property type="nucleotide sequence ID" value="XM_005661113.3"/>
</dbReference>
<dbReference type="RefSeq" id="XP_013849996.1">
    <property type="nucleotide sequence ID" value="XM_013994542.2"/>
</dbReference>
<dbReference type="RefSeq" id="XP_020935882.1">
    <property type="nucleotide sequence ID" value="XM_021080223.1"/>
</dbReference>
<dbReference type="SMR" id="Q766Y6"/>
<dbReference type="STRING" id="9823.ENSSSCP00000014226"/>
<dbReference type="PaxDb" id="9823-ENSSSCP00000014226"/>
<dbReference type="Ensembl" id="ENSSSCT00000014621.4">
    <property type="protein sequence ID" value="ENSSSCP00000014226.1"/>
    <property type="gene ID" value="ENSSSCG00000013386.5"/>
</dbReference>
<dbReference type="Ensembl" id="ENSSSCT00015070969.1">
    <property type="protein sequence ID" value="ENSSSCP00015028431.1"/>
    <property type="gene ID" value="ENSSSCG00015053283.1"/>
</dbReference>
<dbReference type="Ensembl" id="ENSSSCT00025097969.1">
    <property type="protein sequence ID" value="ENSSSCP00025043062.1"/>
    <property type="gene ID" value="ENSSSCG00025071316.1"/>
</dbReference>
<dbReference type="Ensembl" id="ENSSSCT00030048747.1">
    <property type="protein sequence ID" value="ENSSSCP00030022031.1"/>
    <property type="gene ID" value="ENSSSCG00030035155.1"/>
</dbReference>
<dbReference type="Ensembl" id="ENSSSCT00035096310.1">
    <property type="protein sequence ID" value="ENSSSCP00035040525.1"/>
    <property type="gene ID" value="ENSSSCG00035071262.1"/>
</dbReference>
<dbReference type="Ensembl" id="ENSSSCT00040097926.1">
    <property type="protein sequence ID" value="ENSSSCP00040043699.1"/>
    <property type="gene ID" value="ENSSSCG00040071268.1"/>
</dbReference>
<dbReference type="Ensembl" id="ENSSSCT00045026655.1">
    <property type="protein sequence ID" value="ENSSSCP00045018400.1"/>
    <property type="gene ID" value="ENSSSCG00045015714.1"/>
</dbReference>
<dbReference type="Ensembl" id="ENSSSCT00050008270.1">
    <property type="protein sequence ID" value="ENSSSCP00050003538.1"/>
    <property type="gene ID" value="ENSSSCG00050006073.1"/>
</dbReference>
<dbReference type="Ensembl" id="ENSSSCT00055055948.1">
    <property type="protein sequence ID" value="ENSSSCP00055044674.1"/>
    <property type="gene ID" value="ENSSSCG00055028233.1"/>
</dbReference>
<dbReference type="Ensembl" id="ENSSSCT00060010382.1">
    <property type="protein sequence ID" value="ENSSSCP00060003807.1"/>
    <property type="gene ID" value="ENSSSCG00060008130.1"/>
</dbReference>
<dbReference type="Ensembl" id="ENSSSCT00065031152.1">
    <property type="protein sequence ID" value="ENSSSCP00065012748.1"/>
    <property type="gene ID" value="ENSSSCG00065023405.1"/>
</dbReference>
<dbReference type="Ensembl" id="ENSSSCT00115005868">
    <property type="protein sequence ID" value="ENSSSCP00115005462"/>
    <property type="gene ID" value="ENSSSCG00115003470"/>
</dbReference>
<dbReference type="GeneID" id="396573"/>
<dbReference type="KEGG" id="ssc:396573"/>
<dbReference type="CTD" id="396573"/>
<dbReference type="eggNOG" id="ENOG502SQMP">
    <property type="taxonomic scope" value="Eukaryota"/>
</dbReference>
<dbReference type="GeneTree" id="ENSGT00940000156267"/>
<dbReference type="HOGENOM" id="CLU_122444_1_0_1"/>
<dbReference type="InParanoid" id="Q766Y6"/>
<dbReference type="OMA" id="AVMNDYV"/>
<dbReference type="OrthoDB" id="9929923at2759"/>
<dbReference type="TreeFam" id="TF333069"/>
<dbReference type="Reactome" id="R-SSC-418555">
    <property type="pathway name" value="G alpha (s) signalling events"/>
</dbReference>
<dbReference type="Reactome" id="R-SSC-419812">
    <property type="pathway name" value="Calcitonin-like ligand receptors"/>
</dbReference>
<dbReference type="Proteomes" id="UP000008227">
    <property type="component" value="Chromosome 2"/>
</dbReference>
<dbReference type="Proteomes" id="UP000314985">
    <property type="component" value="Unplaced"/>
</dbReference>
<dbReference type="Proteomes" id="UP000694570">
    <property type="component" value="Unplaced"/>
</dbReference>
<dbReference type="Proteomes" id="UP000694571">
    <property type="component" value="Unplaced"/>
</dbReference>
<dbReference type="Proteomes" id="UP000694720">
    <property type="component" value="Unplaced"/>
</dbReference>
<dbReference type="Proteomes" id="UP000694722">
    <property type="component" value="Unplaced"/>
</dbReference>
<dbReference type="Proteomes" id="UP000694723">
    <property type="component" value="Unplaced"/>
</dbReference>
<dbReference type="Proteomes" id="UP000694724">
    <property type="component" value="Unplaced"/>
</dbReference>
<dbReference type="Proteomes" id="UP000694725">
    <property type="component" value="Unplaced"/>
</dbReference>
<dbReference type="Proteomes" id="UP000694726">
    <property type="component" value="Unplaced"/>
</dbReference>
<dbReference type="Proteomes" id="UP000694727">
    <property type="component" value="Unplaced"/>
</dbReference>
<dbReference type="Proteomes" id="UP000694728">
    <property type="component" value="Unplaced"/>
</dbReference>
<dbReference type="Bgee" id="ENSSSCG00000013386">
    <property type="expression patterns" value="Expressed in oocyte and 20 other cell types or tissues"/>
</dbReference>
<dbReference type="GO" id="GO:0005615">
    <property type="term" value="C:extracellular space"/>
    <property type="evidence" value="ECO:0000318"/>
    <property type="project" value="GO_Central"/>
</dbReference>
<dbReference type="GO" id="GO:0031716">
    <property type="term" value="F:calcitonin receptor binding"/>
    <property type="evidence" value="ECO:0000318"/>
    <property type="project" value="GO_Central"/>
</dbReference>
<dbReference type="GO" id="GO:0005179">
    <property type="term" value="F:hormone activity"/>
    <property type="evidence" value="ECO:0007669"/>
    <property type="project" value="InterPro"/>
</dbReference>
<dbReference type="GO" id="GO:0007189">
    <property type="term" value="P:adenylate cyclase-activating G protein-coupled receptor signaling pathway"/>
    <property type="evidence" value="ECO:0000318"/>
    <property type="project" value="GO_Central"/>
</dbReference>
<dbReference type="GO" id="GO:0051480">
    <property type="term" value="P:regulation of cytosolic calcium ion concentration"/>
    <property type="evidence" value="ECO:0000318"/>
    <property type="project" value="GO_Central"/>
</dbReference>
<dbReference type="Gene3D" id="6.10.250.2190">
    <property type="match status" value="1"/>
</dbReference>
<dbReference type="InterPro" id="IPR021117">
    <property type="entry name" value="Calcitonin-like"/>
</dbReference>
<dbReference type="InterPro" id="IPR021116">
    <property type="entry name" value="Calcitonin/adrenomedullin"/>
</dbReference>
<dbReference type="InterPro" id="IPR015476">
    <property type="entry name" value="Calcitonin_gene-rel_peptide"/>
</dbReference>
<dbReference type="InterPro" id="IPR001693">
    <property type="entry name" value="Calcitonin_peptide-like"/>
</dbReference>
<dbReference type="PANTHER" id="PTHR10505:SF3">
    <property type="entry name" value="CALCITONIN GENE-RELATED PEPTIDE 2"/>
    <property type="match status" value="1"/>
</dbReference>
<dbReference type="PANTHER" id="PTHR10505">
    <property type="entry name" value="CALCITONIN-RELATED"/>
    <property type="match status" value="1"/>
</dbReference>
<dbReference type="Pfam" id="PF00214">
    <property type="entry name" value="Calc_CGRP_IAPP"/>
    <property type="match status" value="1"/>
</dbReference>
<dbReference type="PRINTS" id="PR00817">
    <property type="entry name" value="CALCITONINB"/>
</dbReference>
<dbReference type="SMART" id="SM00113">
    <property type="entry name" value="CALCITONIN"/>
    <property type="match status" value="1"/>
</dbReference>
<keyword id="KW-0027">Amidation</keyword>
<keyword id="KW-0165">Cleavage on pair of basic residues</keyword>
<keyword id="KW-1015">Disulfide bond</keyword>
<keyword id="KW-0675">Receptor</keyword>
<keyword id="KW-1185">Reference proteome</keyword>
<keyword id="KW-0964">Secreted</keyword>
<keyword id="KW-0732">Signal</keyword>
<comment type="subcellular location">
    <subcellularLocation>
        <location evidence="1">Secreted</location>
    </subcellularLocation>
</comment>
<comment type="tissue specificity">
    <text evidence="3 4">Mainly expressed in the thyroid gland and CNS. Found in the nerve cells of cerebrum, hippocampus, hypothalamus, pons/midbrain and thalamus.</text>
</comment>
<comment type="similarity">
    <text evidence="5">Belongs to the calcitonin family.</text>
</comment>
<sequence>MGFWKFPPFLILSILVLYQAGMLHAAPFRMALGSSFDSATLTEEEMSLLLVAMVKDYVQMKATVLEQETEDFSITTQERSCNTAICVTHKMAGWLSRSGSVVKNNFMPINMGSKVLGRRRRQPQA</sequence>
<reference key="1">
    <citation type="journal article" date="2003" name="Biochem. Biophys. Res. Commun.">
        <title>Identification of second and third calcitonin receptor-stimulating peptides in porcine brain.</title>
        <authorList>
            <person name="Katafuchi T."/>
            <person name="Hamano K."/>
            <person name="Kikumoto K."/>
            <person name="Minamino N."/>
        </authorList>
    </citation>
    <scope>NUCLEOTIDE SEQUENCE [MRNA]</scope>
    <scope>TISSUE SPECIFICITY</scope>
    <source>
        <tissue>Hypothalamus</tissue>
    </source>
</reference>
<reference key="2">
    <citation type="journal article" date="2008" name="Cytogenet. Genome Res.">
        <title>Genomic organization, expression and evolution of porcine CRSP1, 2, and 3.</title>
        <authorList>
            <person name="Rezaeian A.H."/>
            <person name="Katafuchi T."/>
            <person name="Yoshizawa M."/>
            <person name="Hiraiwa N."/>
            <person name="Saito T."/>
            <person name="Nishibori M."/>
            <person name="Hamano K."/>
            <person name="Minamino N."/>
            <person name="Yasue H."/>
        </authorList>
    </citation>
    <scope>NUCLEOTIDE SEQUENCE [GENOMIC DNA]</scope>
    <scope>TISSUE SPECIFICITY</scope>
</reference>
<organism>
    <name type="scientific">Sus scrofa</name>
    <name type="common">Pig</name>
    <dbReference type="NCBI Taxonomy" id="9823"/>
    <lineage>
        <taxon>Eukaryota</taxon>
        <taxon>Metazoa</taxon>
        <taxon>Chordata</taxon>
        <taxon>Craniata</taxon>
        <taxon>Vertebrata</taxon>
        <taxon>Euteleostomi</taxon>
        <taxon>Mammalia</taxon>
        <taxon>Eutheria</taxon>
        <taxon>Laurasiatheria</taxon>
        <taxon>Artiodactyla</taxon>
        <taxon>Suina</taxon>
        <taxon>Suidae</taxon>
        <taxon>Sus</taxon>
    </lineage>
</organism>
<accession>Q766Y6</accession>
<name>CRSP3_PIG</name>
<evidence type="ECO:0000250" key="1"/>
<evidence type="ECO:0000255" key="2"/>
<evidence type="ECO:0000269" key="3">
    <source>
    </source>
</evidence>
<evidence type="ECO:0000269" key="4">
    <source>
    </source>
</evidence>
<evidence type="ECO:0000305" key="5"/>
<gene>
    <name type="primary">CRSP3</name>
</gene>
<proteinExistence type="evidence at transcript level"/>
<protein>
    <recommendedName>
        <fullName>Calcitonin receptor-stimulating peptide 3</fullName>
        <shortName>CRSP-3</shortName>
    </recommendedName>
</protein>